<organism>
    <name type="scientific">Mannheimia succiniciproducens (strain KCTC 0769BP / MBEL55E)</name>
    <dbReference type="NCBI Taxonomy" id="221988"/>
    <lineage>
        <taxon>Bacteria</taxon>
        <taxon>Pseudomonadati</taxon>
        <taxon>Pseudomonadota</taxon>
        <taxon>Gammaproteobacteria</taxon>
        <taxon>Pasteurellales</taxon>
        <taxon>Pasteurellaceae</taxon>
        <taxon>Basfia</taxon>
    </lineage>
</organism>
<gene>
    <name evidence="1" type="primary">recR</name>
    <name type="ordered locus">MS1506</name>
</gene>
<feature type="chain" id="PRO_0000190346" description="Recombination protein RecR">
    <location>
        <begin position="1"/>
        <end position="200"/>
    </location>
</feature>
<feature type="domain" description="Toprim" evidence="1">
    <location>
        <begin position="81"/>
        <end position="176"/>
    </location>
</feature>
<feature type="zinc finger region" description="C4-type" evidence="1">
    <location>
        <begin position="57"/>
        <end position="72"/>
    </location>
</feature>
<dbReference type="EMBL" id="AE016827">
    <property type="protein sequence ID" value="AAU38113.1"/>
    <property type="molecule type" value="Genomic_DNA"/>
</dbReference>
<dbReference type="RefSeq" id="WP_011200679.1">
    <property type="nucleotide sequence ID" value="NC_006300.1"/>
</dbReference>
<dbReference type="SMR" id="Q65SE7"/>
<dbReference type="STRING" id="221988.MS1506"/>
<dbReference type="KEGG" id="msu:MS1506"/>
<dbReference type="eggNOG" id="COG0353">
    <property type="taxonomic scope" value="Bacteria"/>
</dbReference>
<dbReference type="HOGENOM" id="CLU_060739_1_2_6"/>
<dbReference type="OrthoDB" id="9802672at2"/>
<dbReference type="Proteomes" id="UP000000607">
    <property type="component" value="Chromosome"/>
</dbReference>
<dbReference type="GO" id="GO:0003677">
    <property type="term" value="F:DNA binding"/>
    <property type="evidence" value="ECO:0007669"/>
    <property type="project" value="UniProtKB-UniRule"/>
</dbReference>
<dbReference type="GO" id="GO:0008270">
    <property type="term" value="F:zinc ion binding"/>
    <property type="evidence" value="ECO:0007669"/>
    <property type="project" value="UniProtKB-KW"/>
</dbReference>
<dbReference type="GO" id="GO:0006310">
    <property type="term" value="P:DNA recombination"/>
    <property type="evidence" value="ECO:0007669"/>
    <property type="project" value="UniProtKB-UniRule"/>
</dbReference>
<dbReference type="GO" id="GO:0006281">
    <property type="term" value="P:DNA repair"/>
    <property type="evidence" value="ECO:0007669"/>
    <property type="project" value="UniProtKB-UniRule"/>
</dbReference>
<dbReference type="CDD" id="cd01025">
    <property type="entry name" value="TOPRIM_recR"/>
    <property type="match status" value="1"/>
</dbReference>
<dbReference type="FunFam" id="1.10.8.420:FF:000001">
    <property type="entry name" value="Recombination protein RecR"/>
    <property type="match status" value="1"/>
</dbReference>
<dbReference type="FunFam" id="3.40.1360.10:FF:000001">
    <property type="entry name" value="Recombination protein RecR"/>
    <property type="match status" value="1"/>
</dbReference>
<dbReference type="Gene3D" id="3.40.1360.10">
    <property type="match status" value="1"/>
</dbReference>
<dbReference type="Gene3D" id="6.10.250.240">
    <property type="match status" value="1"/>
</dbReference>
<dbReference type="Gene3D" id="1.10.8.420">
    <property type="entry name" value="RecR Domain 1"/>
    <property type="match status" value="1"/>
</dbReference>
<dbReference type="HAMAP" id="MF_00017">
    <property type="entry name" value="RecR"/>
    <property type="match status" value="1"/>
</dbReference>
<dbReference type="InterPro" id="IPR000093">
    <property type="entry name" value="DNA_Rcmb_RecR"/>
</dbReference>
<dbReference type="InterPro" id="IPR023627">
    <property type="entry name" value="Rcmb_RecR"/>
</dbReference>
<dbReference type="InterPro" id="IPR015967">
    <property type="entry name" value="Rcmb_RecR_Znf"/>
</dbReference>
<dbReference type="InterPro" id="IPR006171">
    <property type="entry name" value="TOPRIM_dom"/>
</dbReference>
<dbReference type="InterPro" id="IPR034137">
    <property type="entry name" value="TOPRIM_RecR"/>
</dbReference>
<dbReference type="NCBIfam" id="TIGR00615">
    <property type="entry name" value="recR"/>
    <property type="match status" value="1"/>
</dbReference>
<dbReference type="PANTHER" id="PTHR30446">
    <property type="entry name" value="RECOMBINATION PROTEIN RECR"/>
    <property type="match status" value="1"/>
</dbReference>
<dbReference type="PANTHER" id="PTHR30446:SF0">
    <property type="entry name" value="RECOMBINATION PROTEIN RECR"/>
    <property type="match status" value="1"/>
</dbReference>
<dbReference type="Pfam" id="PF21175">
    <property type="entry name" value="RecR_C"/>
    <property type="match status" value="1"/>
</dbReference>
<dbReference type="Pfam" id="PF21176">
    <property type="entry name" value="RecR_HhH"/>
    <property type="match status" value="1"/>
</dbReference>
<dbReference type="Pfam" id="PF02132">
    <property type="entry name" value="RecR_ZnF"/>
    <property type="match status" value="1"/>
</dbReference>
<dbReference type="Pfam" id="PF13662">
    <property type="entry name" value="Toprim_4"/>
    <property type="match status" value="1"/>
</dbReference>
<dbReference type="SMART" id="SM00493">
    <property type="entry name" value="TOPRIM"/>
    <property type="match status" value="1"/>
</dbReference>
<dbReference type="SUPFAM" id="SSF111304">
    <property type="entry name" value="Recombination protein RecR"/>
    <property type="match status" value="1"/>
</dbReference>
<dbReference type="PROSITE" id="PS01300">
    <property type="entry name" value="RECR"/>
    <property type="match status" value="1"/>
</dbReference>
<dbReference type="PROSITE" id="PS50880">
    <property type="entry name" value="TOPRIM"/>
    <property type="match status" value="1"/>
</dbReference>
<sequence length="200" mass="22114">MQTSPLLENLIESLRCLPGVGPKSAQRMAYHLLQRDRSGGMNLARALTEAMSKIGHCEHCRTFTEEDICSICDNPRRQNSRLLCVVEMPADIQAIEQTGQFSGRYFVLMGHLSPLDGIGPREIGLDLLQRRLQQEQFNEVILATNPTVEGDATANYIAELCNQQNIKVSRIAHGIPVGGELETVDGTTLTHSFLGRRTIG</sequence>
<protein>
    <recommendedName>
        <fullName evidence="1">Recombination protein RecR</fullName>
    </recommendedName>
</protein>
<comment type="function">
    <text evidence="1">May play a role in DNA repair. It seems to be involved in an RecBC-independent recombinational process of DNA repair. It may act with RecF and RecO.</text>
</comment>
<comment type="similarity">
    <text evidence="1">Belongs to the RecR family.</text>
</comment>
<keyword id="KW-0227">DNA damage</keyword>
<keyword id="KW-0233">DNA recombination</keyword>
<keyword id="KW-0234">DNA repair</keyword>
<keyword id="KW-0479">Metal-binding</keyword>
<keyword id="KW-0862">Zinc</keyword>
<keyword id="KW-0863">Zinc-finger</keyword>
<accession>Q65SE7</accession>
<name>RECR_MANSM</name>
<reference key="1">
    <citation type="journal article" date="2004" name="Nat. Biotechnol.">
        <title>The genome sequence of the capnophilic rumen bacterium Mannheimia succiniciproducens.</title>
        <authorList>
            <person name="Hong S.H."/>
            <person name="Kim J.S."/>
            <person name="Lee S.Y."/>
            <person name="In Y.H."/>
            <person name="Choi S.S."/>
            <person name="Rih J.-K."/>
            <person name="Kim C.H."/>
            <person name="Jeong H."/>
            <person name="Hur C.G."/>
            <person name="Kim J.J."/>
        </authorList>
    </citation>
    <scope>NUCLEOTIDE SEQUENCE [LARGE SCALE GENOMIC DNA]</scope>
    <source>
        <strain>KCTC 0769BP / MBEL55E</strain>
    </source>
</reference>
<evidence type="ECO:0000255" key="1">
    <source>
        <dbReference type="HAMAP-Rule" id="MF_00017"/>
    </source>
</evidence>
<proteinExistence type="inferred from homology"/>